<protein>
    <recommendedName>
        <fullName>Uncharacterized protein CPn_0121/CP_0652/CPj0121/CpB0122</fullName>
    </recommendedName>
</protein>
<reference key="1">
    <citation type="journal article" date="1999" name="Nat. Genet.">
        <title>Comparative genomes of Chlamydia pneumoniae and C. trachomatis.</title>
        <authorList>
            <person name="Kalman S."/>
            <person name="Mitchell W.P."/>
            <person name="Marathe R."/>
            <person name="Lammel C.J."/>
            <person name="Fan J."/>
            <person name="Hyman R.W."/>
            <person name="Olinger L."/>
            <person name="Grimwood J."/>
            <person name="Davis R.W."/>
            <person name="Stephens R.S."/>
        </authorList>
    </citation>
    <scope>NUCLEOTIDE SEQUENCE [LARGE SCALE GENOMIC DNA]</scope>
    <source>
        <strain>CWL029</strain>
    </source>
</reference>
<reference key="2">
    <citation type="journal article" date="2000" name="Nucleic Acids Res.">
        <title>Genome sequences of Chlamydia trachomatis MoPn and Chlamydia pneumoniae AR39.</title>
        <authorList>
            <person name="Read T.D."/>
            <person name="Brunham R.C."/>
            <person name="Shen C."/>
            <person name="Gill S.R."/>
            <person name="Heidelberg J.F."/>
            <person name="White O."/>
            <person name="Hickey E.K."/>
            <person name="Peterson J.D."/>
            <person name="Utterback T.R."/>
            <person name="Berry K.J."/>
            <person name="Bass S."/>
            <person name="Linher K.D."/>
            <person name="Weidman J.F."/>
            <person name="Khouri H.M."/>
            <person name="Craven B."/>
            <person name="Bowman C."/>
            <person name="Dodson R.J."/>
            <person name="Gwinn M.L."/>
            <person name="Nelson W.C."/>
            <person name="DeBoy R.T."/>
            <person name="Kolonay J.F."/>
            <person name="McClarty G."/>
            <person name="Salzberg S.L."/>
            <person name="Eisen J.A."/>
            <person name="Fraser C.M."/>
        </authorList>
    </citation>
    <scope>NUCLEOTIDE SEQUENCE [LARGE SCALE GENOMIC DNA]</scope>
    <source>
        <strain>AR39</strain>
    </source>
</reference>
<reference key="3">
    <citation type="journal article" date="2000" name="Nucleic Acids Res.">
        <title>Comparison of whole genome sequences of Chlamydia pneumoniae J138 from Japan and CWL029 from USA.</title>
        <authorList>
            <person name="Shirai M."/>
            <person name="Hirakawa H."/>
            <person name="Kimoto M."/>
            <person name="Tabuchi M."/>
            <person name="Kishi F."/>
            <person name="Ouchi K."/>
            <person name="Shiba T."/>
            <person name="Ishii K."/>
            <person name="Hattori M."/>
            <person name="Kuhara S."/>
            <person name="Nakazawa T."/>
        </authorList>
    </citation>
    <scope>NUCLEOTIDE SEQUENCE [LARGE SCALE GENOMIC DNA]</scope>
    <source>
        <strain>J138</strain>
    </source>
</reference>
<reference key="4">
    <citation type="submission" date="2002-05" db="EMBL/GenBank/DDBJ databases">
        <title>The genome sequence of Chlamydia pneumoniae TW183 and comparison with other Chlamydia strains based on whole genome sequence analysis.</title>
        <authorList>
            <person name="Geng M.M."/>
            <person name="Schuhmacher A."/>
            <person name="Muehldorfer I."/>
            <person name="Bensch K.W."/>
            <person name="Schaefer K.P."/>
            <person name="Schneider S."/>
            <person name="Pohl T."/>
            <person name="Essig A."/>
            <person name="Marre R."/>
            <person name="Melchers K."/>
        </authorList>
    </citation>
    <scope>NUCLEOTIDE SEQUENCE [LARGE SCALE GENOMIC DNA]</scope>
    <source>
        <strain>TW-183</strain>
    </source>
</reference>
<gene>
    <name type="ordered locus">CPn_0121</name>
    <name type="ordered locus">CP_0652</name>
    <name type="ordered locus">CPj0121</name>
    <name type="ordered locus">CpB0122</name>
</gene>
<feature type="chain" id="PRO_0000218358" description="Uncharacterized protein CPn_0121/CP_0652/CPj0121/CpB0122">
    <location>
        <begin position="1"/>
        <end position="97"/>
    </location>
</feature>
<feature type="region of interest" description="Disordered" evidence="1">
    <location>
        <begin position="72"/>
        <end position="97"/>
    </location>
</feature>
<feature type="compositionally biased region" description="Basic and acidic residues" evidence="1">
    <location>
        <begin position="73"/>
        <end position="88"/>
    </location>
</feature>
<accession>Q9Z960</accession>
<dbReference type="EMBL" id="AE001363">
    <property type="protein sequence ID" value="AAD18274.1"/>
    <property type="molecule type" value="Genomic_DNA"/>
</dbReference>
<dbReference type="EMBL" id="AE002161">
    <property type="protein sequence ID" value="AAF38467.1"/>
    <property type="molecule type" value="Genomic_DNA"/>
</dbReference>
<dbReference type="EMBL" id="BA000008">
    <property type="protein sequence ID" value="BAA98332.1"/>
    <property type="molecule type" value="Genomic_DNA"/>
</dbReference>
<dbReference type="EMBL" id="AE009440">
    <property type="protein sequence ID" value="AAP98055.1"/>
    <property type="molecule type" value="Genomic_DNA"/>
</dbReference>
<dbReference type="PIR" id="B86506">
    <property type="entry name" value="B86506"/>
</dbReference>
<dbReference type="PIR" id="G72117">
    <property type="entry name" value="G72117"/>
</dbReference>
<dbReference type="RefSeq" id="NP_224329.1">
    <property type="nucleotide sequence ID" value="NC_000922.1"/>
</dbReference>
<dbReference type="RefSeq" id="WP_010882771.1">
    <property type="nucleotide sequence ID" value="NZ_LN847257.1"/>
</dbReference>
<dbReference type="SMR" id="Q9Z960"/>
<dbReference type="STRING" id="406984.CPK_ORF00633"/>
<dbReference type="GeneID" id="45050166"/>
<dbReference type="KEGG" id="cpa:CP_0652"/>
<dbReference type="KEGG" id="cpj:CPj0121"/>
<dbReference type="KEGG" id="cpn:CPn_0121"/>
<dbReference type="KEGG" id="cpt:CpB0122"/>
<dbReference type="PATRIC" id="fig|115713.3.peg.136"/>
<dbReference type="HOGENOM" id="CLU_180607_0_0_0"/>
<dbReference type="OMA" id="SEPIASM"/>
<dbReference type="OrthoDB" id="18977at2"/>
<dbReference type="Proteomes" id="UP000000583">
    <property type="component" value="Chromosome"/>
</dbReference>
<dbReference type="Proteomes" id="UP000000801">
    <property type="component" value="Chromosome"/>
</dbReference>
<comment type="similarity">
    <text evidence="2">Belongs to the chlamydial CPn_0121/CT_031/TC_0300 family.</text>
</comment>
<name>Y121_CHLPN</name>
<proteinExistence type="inferred from homology"/>
<organism>
    <name type="scientific">Chlamydia pneumoniae</name>
    <name type="common">Chlamydophila pneumoniae</name>
    <dbReference type="NCBI Taxonomy" id="83558"/>
    <lineage>
        <taxon>Bacteria</taxon>
        <taxon>Pseudomonadati</taxon>
        <taxon>Chlamydiota</taxon>
        <taxon>Chlamydiia</taxon>
        <taxon>Chlamydiales</taxon>
        <taxon>Chlamydiaceae</taxon>
        <taxon>Chlamydia/Chlamydophila group</taxon>
        <taxon>Chlamydia</taxon>
    </lineage>
</organism>
<sequence length="97" mass="11098">MIKKDRFTNEKLNKLFDSPFSLVNYAIKQAKIKIAKGDVRSSNVAIETLVLLDREGIQPEFTEEIVVTASPTVERKRSEHTNSRKKDPSAYTWSDVK</sequence>
<evidence type="ECO:0000256" key="1">
    <source>
        <dbReference type="SAM" id="MobiDB-lite"/>
    </source>
</evidence>
<evidence type="ECO:0000305" key="2"/>